<feature type="chain" id="PRO_0000170923" description="Nitric oxide synthase 1">
    <location>
        <begin position="1"/>
        <end position="1435"/>
    </location>
</feature>
<feature type="domain" description="PDZ" evidence="6">
    <location>
        <begin position="17"/>
        <end position="99"/>
    </location>
</feature>
<feature type="domain" description="Flavodoxin-like" evidence="5">
    <location>
        <begin position="761"/>
        <end position="941"/>
    </location>
</feature>
<feature type="domain" description="FAD-binding FR-type" evidence="7">
    <location>
        <begin position="996"/>
        <end position="1243"/>
    </location>
</feature>
<feature type="region of interest" description="Interaction with NOSIP" evidence="2">
    <location>
        <begin position="1"/>
        <end position="206"/>
    </location>
</feature>
<feature type="region of interest" description="Disordered" evidence="8">
    <location>
        <begin position="110"/>
        <end position="201"/>
    </location>
</feature>
<feature type="region of interest" description="Interaction with DYNLL1/PIN" evidence="2">
    <location>
        <begin position="164"/>
        <end position="246"/>
    </location>
</feature>
<feature type="region of interest" description="Disordered" evidence="8">
    <location>
        <begin position="277"/>
        <end position="304"/>
    </location>
</feature>
<feature type="region of interest" description="Calmodulin-binding" evidence="2">
    <location>
        <begin position="731"/>
        <end position="751"/>
    </location>
</feature>
<feature type="compositionally biased region" description="Polar residues" evidence="8">
    <location>
        <begin position="290"/>
        <end position="300"/>
    </location>
</feature>
<feature type="binding site" evidence="1">
    <location>
        <position position="340"/>
    </location>
    <ligand>
        <name>(6R)-L-erythro-5,6,7,8-tetrahydrobiopterin</name>
        <dbReference type="ChEBI" id="CHEBI:59560"/>
    </ligand>
</feature>
<feature type="binding site" description="axial binding residue" evidence="1">
    <location>
        <position position="421"/>
    </location>
    <ligand>
        <name>heme b</name>
        <dbReference type="ChEBI" id="CHEBI:60344"/>
    </ligand>
    <ligandPart>
        <name>Fe</name>
        <dbReference type="ChEBI" id="CHEBI:18248"/>
    </ligandPart>
</feature>
<feature type="binding site" evidence="1">
    <location>
        <position position="484"/>
    </location>
    <ligand>
        <name>L-arginine</name>
        <dbReference type="ChEBI" id="CHEBI:32682"/>
    </ligand>
</feature>
<feature type="binding site" evidence="1">
    <location>
        <position position="593"/>
    </location>
    <ligand>
        <name>L-arginine</name>
        <dbReference type="ChEBI" id="CHEBI:32682"/>
    </ligand>
</feature>
<feature type="binding site" evidence="1">
    <location>
        <position position="594"/>
    </location>
    <ligand>
        <name>L-arginine</name>
        <dbReference type="ChEBI" id="CHEBI:32682"/>
    </ligand>
</feature>
<feature type="binding site" evidence="1">
    <location>
        <position position="598"/>
    </location>
    <ligand>
        <name>L-arginine</name>
        <dbReference type="ChEBI" id="CHEBI:32682"/>
    </ligand>
</feature>
<feature type="binding site" evidence="1">
    <location>
        <position position="683"/>
    </location>
    <ligand>
        <name>(6R)-L-erythro-5,6,7,8-tetrahydrobiopterin</name>
        <dbReference type="ChEBI" id="CHEBI:59560"/>
    </ligand>
</feature>
<feature type="binding site" evidence="1">
    <location>
        <position position="684"/>
    </location>
    <ligand>
        <name>(6R)-L-erythro-5,6,7,8-tetrahydrobiopterin</name>
        <dbReference type="ChEBI" id="CHEBI:59560"/>
    </ligand>
</feature>
<feature type="binding site" evidence="1">
    <location>
        <position position="697"/>
    </location>
    <ligand>
        <name>(6R)-L-erythro-5,6,7,8-tetrahydrobiopterin</name>
        <dbReference type="ChEBI" id="CHEBI:59560"/>
    </ligand>
</feature>
<feature type="binding site" evidence="1">
    <location>
        <position position="712"/>
    </location>
    <ligand>
        <name>heme b</name>
        <dbReference type="ChEBI" id="CHEBI:60344"/>
    </ligand>
</feature>
<feature type="binding site" evidence="2">
    <location>
        <position position="767"/>
    </location>
    <ligand>
        <name>FMN</name>
        <dbReference type="ChEBI" id="CHEBI:58210"/>
    </ligand>
</feature>
<feature type="binding site" evidence="2">
    <location>
        <position position="768"/>
    </location>
    <ligand>
        <name>FMN</name>
        <dbReference type="ChEBI" id="CHEBI:58210"/>
    </ligand>
</feature>
<feature type="binding site" evidence="2">
    <location>
        <position position="769"/>
    </location>
    <ligand>
        <name>FMN</name>
        <dbReference type="ChEBI" id="CHEBI:58210"/>
    </ligand>
</feature>
<feature type="binding site" evidence="2">
    <location>
        <position position="771"/>
    </location>
    <ligand>
        <name>FMN</name>
        <dbReference type="ChEBI" id="CHEBI:58210"/>
    </ligand>
</feature>
<feature type="binding site" evidence="2">
    <location>
        <position position="772"/>
    </location>
    <ligand>
        <name>FMN</name>
        <dbReference type="ChEBI" id="CHEBI:58210"/>
    </ligand>
</feature>
<feature type="binding site" evidence="2">
    <location>
        <position position="813"/>
    </location>
    <ligand>
        <name>FMN</name>
        <dbReference type="ChEBI" id="CHEBI:58210"/>
    </ligand>
</feature>
<feature type="binding site" evidence="2">
    <location>
        <position position="814"/>
    </location>
    <ligand>
        <name>FMN</name>
        <dbReference type="ChEBI" id="CHEBI:58210"/>
    </ligand>
</feature>
<feature type="binding site" evidence="2">
    <location>
        <position position="818"/>
    </location>
    <ligand>
        <name>FMN</name>
        <dbReference type="ChEBI" id="CHEBI:58210"/>
    </ligand>
</feature>
<feature type="binding site" evidence="2">
    <location>
        <position position="892"/>
    </location>
    <ligand>
        <name>FMN</name>
        <dbReference type="ChEBI" id="CHEBI:58210"/>
    </ligand>
</feature>
<feature type="binding site" evidence="2">
    <location>
        <position position="897"/>
    </location>
    <ligand>
        <name>FMN</name>
        <dbReference type="ChEBI" id="CHEBI:58210"/>
    </ligand>
</feature>
<feature type="binding site" evidence="2">
    <location>
        <position position="899"/>
    </location>
    <ligand>
        <name>FMN</name>
        <dbReference type="ChEBI" id="CHEBI:58210"/>
    </ligand>
</feature>
<feature type="binding site" evidence="2">
    <location>
        <position position="925"/>
    </location>
    <ligand>
        <name>FMN</name>
        <dbReference type="ChEBI" id="CHEBI:58210"/>
    </ligand>
</feature>
<feature type="binding site" evidence="2">
    <location>
        <position position="929"/>
    </location>
    <ligand>
        <name>FMN</name>
        <dbReference type="ChEBI" id="CHEBI:58210"/>
    </ligand>
</feature>
<feature type="binding site" evidence="2">
    <location>
        <position position="1016"/>
    </location>
    <ligand>
        <name>NADP(+)</name>
        <dbReference type="ChEBI" id="CHEBI:58349"/>
    </ligand>
</feature>
<feature type="binding site" evidence="2">
    <location>
        <position position="1038"/>
    </location>
    <ligand>
        <name>FAD</name>
        <dbReference type="ChEBI" id="CHEBI:57692"/>
    </ligand>
</feature>
<feature type="binding site" evidence="2">
    <location>
        <position position="1179"/>
    </location>
    <ligand>
        <name>FAD</name>
        <dbReference type="ChEBI" id="CHEBI:57692"/>
    </ligand>
</feature>
<feature type="binding site" evidence="2">
    <location>
        <position position="1180"/>
    </location>
    <ligand>
        <name>FAD</name>
        <dbReference type="ChEBI" id="CHEBI:57692"/>
    </ligand>
</feature>
<feature type="binding site" evidence="2">
    <location>
        <position position="1181"/>
    </location>
    <ligand>
        <name>FAD</name>
        <dbReference type="ChEBI" id="CHEBI:57692"/>
    </ligand>
</feature>
<feature type="binding site" evidence="2">
    <location>
        <position position="1182"/>
    </location>
    <ligand>
        <name>FAD</name>
        <dbReference type="ChEBI" id="CHEBI:57692"/>
    </ligand>
</feature>
<feature type="binding site" evidence="2">
    <location>
        <position position="1197"/>
    </location>
    <ligand>
        <name>FAD</name>
        <dbReference type="ChEBI" id="CHEBI:57692"/>
    </ligand>
</feature>
<feature type="binding site" evidence="2">
    <location>
        <position position="1199"/>
    </location>
    <ligand>
        <name>FAD</name>
        <dbReference type="ChEBI" id="CHEBI:57692"/>
    </ligand>
</feature>
<feature type="binding site" evidence="2">
    <location>
        <position position="1202"/>
    </location>
    <ligand>
        <name>NADP(+)</name>
        <dbReference type="ChEBI" id="CHEBI:58349"/>
    </ligand>
</feature>
<feature type="binding site" evidence="2">
    <location>
        <position position="1203"/>
    </location>
    <ligand>
        <name>FAD</name>
        <dbReference type="ChEBI" id="CHEBI:57692"/>
    </ligand>
</feature>
<feature type="binding site" evidence="2">
    <location>
        <position position="1216"/>
    </location>
    <ligand>
        <name>FAD</name>
        <dbReference type="ChEBI" id="CHEBI:57692"/>
    </ligand>
</feature>
<feature type="binding site" evidence="2">
    <location>
        <position position="1217"/>
    </location>
    <ligand>
        <name>FAD</name>
        <dbReference type="ChEBI" id="CHEBI:57692"/>
    </ligand>
</feature>
<feature type="binding site" evidence="2">
    <location>
        <position position="1218"/>
    </location>
    <ligand>
        <name>FAD</name>
        <dbReference type="ChEBI" id="CHEBI:57692"/>
    </ligand>
</feature>
<feature type="binding site" evidence="2">
    <location>
        <position position="1257"/>
    </location>
    <ligand>
        <name>NADP(+)</name>
        <dbReference type="ChEBI" id="CHEBI:58349"/>
    </ligand>
</feature>
<feature type="binding site" evidence="2">
    <location>
        <position position="1290"/>
    </location>
    <ligand>
        <name>NADP(+)</name>
        <dbReference type="ChEBI" id="CHEBI:58349"/>
    </ligand>
</feature>
<feature type="binding site" evidence="2">
    <location>
        <position position="1319"/>
    </location>
    <ligand>
        <name>NADP(+)</name>
        <dbReference type="ChEBI" id="CHEBI:58349"/>
    </ligand>
</feature>
<feature type="binding site" evidence="2">
    <location>
        <position position="1320"/>
    </location>
    <ligand>
        <name>NADP(+)</name>
        <dbReference type="ChEBI" id="CHEBI:58349"/>
    </ligand>
</feature>
<feature type="binding site" evidence="2">
    <location>
        <position position="1326"/>
    </location>
    <ligand>
        <name>NADP(+)</name>
        <dbReference type="ChEBI" id="CHEBI:58349"/>
    </ligand>
</feature>
<feature type="binding site" evidence="2">
    <location>
        <position position="1328"/>
    </location>
    <ligand>
        <name>NADP(+)</name>
        <dbReference type="ChEBI" id="CHEBI:58349"/>
    </ligand>
</feature>
<feature type="binding site" evidence="2">
    <location>
        <position position="1330"/>
    </location>
    <ligand>
        <name>NADP(+)</name>
        <dbReference type="ChEBI" id="CHEBI:58349"/>
    </ligand>
</feature>
<feature type="binding site" evidence="2">
    <location>
        <position position="1363"/>
    </location>
    <ligand>
        <name>NADP(+)</name>
        <dbReference type="ChEBI" id="CHEBI:58349"/>
    </ligand>
</feature>
<feature type="binding site" evidence="2">
    <location>
        <position position="1404"/>
    </location>
    <ligand>
        <name>NADP(+)</name>
        <dbReference type="ChEBI" id="CHEBI:58349"/>
    </ligand>
</feature>
<feature type="binding site" evidence="2">
    <location>
        <position position="1406"/>
    </location>
    <ligand>
        <name>NADP(+)</name>
        <dbReference type="ChEBI" id="CHEBI:58349"/>
    </ligand>
</feature>
<feature type="modified residue" description="Phosphoserine" evidence="2">
    <location>
        <position position="853"/>
    </location>
</feature>
<feature type="modified residue" description="Phosphoserine" evidence="3">
    <location>
        <position position="863"/>
    </location>
</feature>
<feature type="modified residue" description="Phosphoserine" evidence="3">
    <location>
        <position position="864"/>
    </location>
</feature>
<dbReference type="EC" id="1.14.13.39" evidence="2"/>
<dbReference type="EMBL" id="U91584">
    <property type="protein sequence ID" value="AAB68663.1"/>
    <property type="molecule type" value="mRNA"/>
</dbReference>
<dbReference type="RefSeq" id="NP_001075854.1">
    <property type="nucleotide sequence ID" value="NM_001082385.1"/>
</dbReference>
<dbReference type="BMRB" id="O19132"/>
<dbReference type="SMR" id="O19132"/>
<dbReference type="FunCoup" id="O19132">
    <property type="interactions" value="93"/>
</dbReference>
<dbReference type="PaxDb" id="9986-ENSOCUP00000020745"/>
<dbReference type="GeneID" id="100009243"/>
<dbReference type="KEGG" id="ocu:100009243"/>
<dbReference type="CTD" id="4842"/>
<dbReference type="eggNOG" id="KOG1158">
    <property type="taxonomic scope" value="Eukaryota"/>
</dbReference>
<dbReference type="InParanoid" id="O19132"/>
<dbReference type="OrthoDB" id="1688044at2759"/>
<dbReference type="Proteomes" id="UP000001811">
    <property type="component" value="Unplaced"/>
</dbReference>
<dbReference type="GO" id="GO:0043197">
    <property type="term" value="C:dendritic spine"/>
    <property type="evidence" value="ECO:0007669"/>
    <property type="project" value="UniProtKB-SubCell"/>
</dbReference>
<dbReference type="GO" id="GO:0042383">
    <property type="term" value="C:sarcolemma"/>
    <property type="evidence" value="ECO:0007669"/>
    <property type="project" value="UniProtKB-SubCell"/>
</dbReference>
<dbReference type="GO" id="GO:0005516">
    <property type="term" value="F:calmodulin binding"/>
    <property type="evidence" value="ECO:0007669"/>
    <property type="project" value="UniProtKB-KW"/>
</dbReference>
<dbReference type="GO" id="GO:0050660">
    <property type="term" value="F:flavin adenine dinucleotide binding"/>
    <property type="evidence" value="ECO:0007669"/>
    <property type="project" value="InterPro"/>
</dbReference>
<dbReference type="GO" id="GO:0010181">
    <property type="term" value="F:FMN binding"/>
    <property type="evidence" value="ECO:0007669"/>
    <property type="project" value="InterPro"/>
</dbReference>
<dbReference type="GO" id="GO:0020037">
    <property type="term" value="F:heme binding"/>
    <property type="evidence" value="ECO:0007669"/>
    <property type="project" value="InterPro"/>
</dbReference>
<dbReference type="GO" id="GO:0046872">
    <property type="term" value="F:metal ion binding"/>
    <property type="evidence" value="ECO:0007669"/>
    <property type="project" value="UniProtKB-KW"/>
</dbReference>
<dbReference type="GO" id="GO:0050661">
    <property type="term" value="F:NADP binding"/>
    <property type="evidence" value="ECO:0007669"/>
    <property type="project" value="InterPro"/>
</dbReference>
<dbReference type="GO" id="GO:0004517">
    <property type="term" value="F:nitric-oxide synthase activity"/>
    <property type="evidence" value="ECO:0000250"/>
    <property type="project" value="UniProtKB"/>
</dbReference>
<dbReference type="GO" id="GO:0006809">
    <property type="term" value="P:nitric oxide biosynthetic process"/>
    <property type="evidence" value="ECO:0007669"/>
    <property type="project" value="InterPro"/>
</dbReference>
<dbReference type="CDD" id="cd06202">
    <property type="entry name" value="Nitric_oxide_synthase"/>
    <property type="match status" value="1"/>
</dbReference>
<dbReference type="CDD" id="cd00795">
    <property type="entry name" value="NOS_oxygenase_euk"/>
    <property type="match status" value="1"/>
</dbReference>
<dbReference type="CDD" id="cd06708">
    <property type="entry name" value="PDZ_nNOS-like"/>
    <property type="match status" value="1"/>
</dbReference>
<dbReference type="FunFam" id="3.90.440.10:FF:000001">
    <property type="entry name" value="Endothelial nitric oxide synthase"/>
    <property type="match status" value="1"/>
</dbReference>
<dbReference type="FunFam" id="1.20.990.10:FF:000002">
    <property type="entry name" value="Nitric oxide synthase"/>
    <property type="match status" value="1"/>
</dbReference>
<dbReference type="FunFam" id="2.30.42.10:FF:000069">
    <property type="entry name" value="Nitric oxide synthase"/>
    <property type="match status" value="1"/>
</dbReference>
<dbReference type="FunFam" id="3.40.50.360:FF:000003">
    <property type="entry name" value="Nitric oxide synthase"/>
    <property type="match status" value="1"/>
</dbReference>
<dbReference type="FunFam" id="3.40.50.80:FF:000003">
    <property type="entry name" value="Nitric oxide synthase"/>
    <property type="match status" value="1"/>
</dbReference>
<dbReference type="FunFam" id="3.90.1230.10:FF:000001">
    <property type="entry name" value="Nitric oxide synthase, brain"/>
    <property type="match status" value="1"/>
</dbReference>
<dbReference type="Gene3D" id="2.30.42.10">
    <property type="match status" value="1"/>
</dbReference>
<dbReference type="Gene3D" id="3.40.50.360">
    <property type="match status" value="1"/>
</dbReference>
<dbReference type="Gene3D" id="1.20.990.10">
    <property type="entry name" value="NADPH-cytochrome p450 Reductase, Chain A, domain 3"/>
    <property type="match status" value="1"/>
</dbReference>
<dbReference type="Gene3D" id="3.90.340.10">
    <property type="entry name" value="Nitric Oxide Synthase, Chain A, domain 1"/>
    <property type="match status" value="1"/>
</dbReference>
<dbReference type="Gene3D" id="3.90.1230.10">
    <property type="entry name" value="Nitric Oxide Synthase, Chain A, domain 3"/>
    <property type="match status" value="1"/>
</dbReference>
<dbReference type="Gene3D" id="3.90.440.10">
    <property type="entry name" value="Nitric Oxide Synthase,Heme Domain,Chain A domain 2"/>
    <property type="match status" value="1"/>
</dbReference>
<dbReference type="Gene3D" id="3.40.50.80">
    <property type="entry name" value="Nucleotide-binding domain of ferredoxin-NADP reductase (FNR) module"/>
    <property type="match status" value="1"/>
</dbReference>
<dbReference type="Gene3D" id="2.40.30.10">
    <property type="entry name" value="Translation factors"/>
    <property type="match status" value="1"/>
</dbReference>
<dbReference type="InterPro" id="IPR003097">
    <property type="entry name" value="CysJ-like_FAD-binding"/>
</dbReference>
<dbReference type="InterPro" id="IPR017927">
    <property type="entry name" value="FAD-bd_FR_type"/>
</dbReference>
<dbReference type="InterPro" id="IPR001094">
    <property type="entry name" value="Flavdoxin-like"/>
</dbReference>
<dbReference type="InterPro" id="IPR008254">
    <property type="entry name" value="Flavodoxin/NO_synth"/>
</dbReference>
<dbReference type="InterPro" id="IPR001709">
    <property type="entry name" value="Flavoprot_Pyr_Nucl_cyt_Rdtase"/>
</dbReference>
<dbReference type="InterPro" id="IPR029039">
    <property type="entry name" value="Flavoprotein-like_sf"/>
</dbReference>
<dbReference type="InterPro" id="IPR039261">
    <property type="entry name" value="FNR_nucleotide-bd"/>
</dbReference>
<dbReference type="InterPro" id="IPR023173">
    <property type="entry name" value="NADPH_Cyt_P450_Rdtase_alpha"/>
</dbReference>
<dbReference type="InterPro" id="IPR050607">
    <property type="entry name" value="NOS"/>
</dbReference>
<dbReference type="InterPro" id="IPR044943">
    <property type="entry name" value="NOS_dom_1"/>
</dbReference>
<dbReference type="InterPro" id="IPR044940">
    <property type="entry name" value="NOS_dom_2"/>
</dbReference>
<dbReference type="InterPro" id="IPR044944">
    <property type="entry name" value="NOS_dom_3"/>
</dbReference>
<dbReference type="InterPro" id="IPR012144">
    <property type="entry name" value="NOS_euk"/>
</dbReference>
<dbReference type="InterPro" id="IPR004030">
    <property type="entry name" value="NOS_N"/>
</dbReference>
<dbReference type="InterPro" id="IPR036119">
    <property type="entry name" value="NOS_N_sf"/>
</dbReference>
<dbReference type="InterPro" id="IPR001433">
    <property type="entry name" value="OxRdtase_FAD/NAD-bd"/>
</dbReference>
<dbReference type="InterPro" id="IPR001478">
    <property type="entry name" value="PDZ"/>
</dbReference>
<dbReference type="InterPro" id="IPR036034">
    <property type="entry name" value="PDZ_sf"/>
</dbReference>
<dbReference type="InterPro" id="IPR017938">
    <property type="entry name" value="Riboflavin_synthase-like_b-brl"/>
</dbReference>
<dbReference type="PANTHER" id="PTHR43410:SF2">
    <property type="entry name" value="NITRIC OXIDE SYNTHASE"/>
    <property type="match status" value="1"/>
</dbReference>
<dbReference type="PANTHER" id="PTHR43410">
    <property type="entry name" value="NITRIC OXIDE SYNTHASE OXYGENASE"/>
    <property type="match status" value="1"/>
</dbReference>
<dbReference type="Pfam" id="PF00667">
    <property type="entry name" value="FAD_binding_1"/>
    <property type="match status" value="1"/>
</dbReference>
<dbReference type="Pfam" id="PF00258">
    <property type="entry name" value="Flavodoxin_1"/>
    <property type="match status" value="1"/>
</dbReference>
<dbReference type="Pfam" id="PF00175">
    <property type="entry name" value="NAD_binding_1"/>
    <property type="match status" value="1"/>
</dbReference>
<dbReference type="Pfam" id="PF02898">
    <property type="entry name" value="NO_synthase"/>
    <property type="match status" value="1"/>
</dbReference>
<dbReference type="Pfam" id="PF00595">
    <property type="entry name" value="PDZ"/>
    <property type="match status" value="1"/>
</dbReference>
<dbReference type="PIRSF" id="PIRSF000333">
    <property type="entry name" value="NOS"/>
    <property type="match status" value="1"/>
</dbReference>
<dbReference type="PRINTS" id="PR00369">
    <property type="entry name" value="FLAVODOXIN"/>
</dbReference>
<dbReference type="PRINTS" id="PR00371">
    <property type="entry name" value="FPNCR"/>
</dbReference>
<dbReference type="SMART" id="SM00228">
    <property type="entry name" value="PDZ"/>
    <property type="match status" value="1"/>
</dbReference>
<dbReference type="SUPFAM" id="SSF52343">
    <property type="entry name" value="Ferredoxin reductase-like, C-terminal NADP-linked domain"/>
    <property type="match status" value="1"/>
</dbReference>
<dbReference type="SUPFAM" id="SSF52218">
    <property type="entry name" value="Flavoproteins"/>
    <property type="match status" value="1"/>
</dbReference>
<dbReference type="SUPFAM" id="SSF56512">
    <property type="entry name" value="Nitric oxide (NO) synthase oxygenase domain"/>
    <property type="match status" value="1"/>
</dbReference>
<dbReference type="SUPFAM" id="SSF50156">
    <property type="entry name" value="PDZ domain-like"/>
    <property type="match status" value="1"/>
</dbReference>
<dbReference type="SUPFAM" id="SSF63380">
    <property type="entry name" value="Riboflavin synthase domain-like"/>
    <property type="match status" value="1"/>
</dbReference>
<dbReference type="PROSITE" id="PS51384">
    <property type="entry name" value="FAD_FR"/>
    <property type="match status" value="1"/>
</dbReference>
<dbReference type="PROSITE" id="PS50902">
    <property type="entry name" value="FLAVODOXIN_LIKE"/>
    <property type="match status" value="1"/>
</dbReference>
<dbReference type="PROSITE" id="PS60001">
    <property type="entry name" value="NOS"/>
    <property type="match status" value="1"/>
</dbReference>
<dbReference type="PROSITE" id="PS50106">
    <property type="entry name" value="PDZ"/>
    <property type="match status" value="1"/>
</dbReference>
<organism>
    <name type="scientific">Oryctolagus cuniculus</name>
    <name type="common">Rabbit</name>
    <dbReference type="NCBI Taxonomy" id="9986"/>
    <lineage>
        <taxon>Eukaryota</taxon>
        <taxon>Metazoa</taxon>
        <taxon>Chordata</taxon>
        <taxon>Craniata</taxon>
        <taxon>Vertebrata</taxon>
        <taxon>Euteleostomi</taxon>
        <taxon>Mammalia</taxon>
        <taxon>Eutheria</taxon>
        <taxon>Euarchontoglires</taxon>
        <taxon>Glires</taxon>
        <taxon>Lagomorpha</taxon>
        <taxon>Leporidae</taxon>
        <taxon>Oryctolagus</taxon>
    </lineage>
</organism>
<proteinExistence type="evidence at transcript level"/>
<protein>
    <recommendedName>
        <fullName evidence="9">Nitric oxide synthase 1</fullName>
        <ecNumber evidence="2">1.14.13.39</ecNumber>
    </recommendedName>
    <alternativeName>
        <fullName>Constitutive NOS</fullName>
    </alternativeName>
    <alternativeName>
        <fullName>NC-NOS</fullName>
    </alternativeName>
    <alternativeName>
        <fullName>NOS type I</fullName>
    </alternativeName>
    <alternativeName>
        <fullName>Neuronal NOS</fullName>
        <shortName>N-NOS</shortName>
        <shortName>nNOS</shortName>
    </alternativeName>
    <alternativeName>
        <fullName evidence="9">Nitric oxide synthase, brain</fullName>
        <shortName evidence="9">bNOS</shortName>
    </alternativeName>
    <alternativeName>
        <fullName>Peptidyl-cysteine S-nitrosylase NOS1</fullName>
    </alternativeName>
</protein>
<evidence type="ECO:0000250" key="1">
    <source>
        <dbReference type="UniProtKB" id="P29475"/>
    </source>
</evidence>
<evidence type="ECO:0000250" key="2">
    <source>
        <dbReference type="UniProtKB" id="P29476"/>
    </source>
</evidence>
<evidence type="ECO:0000250" key="3">
    <source>
        <dbReference type="UniProtKB" id="Q9Z0J4"/>
    </source>
</evidence>
<evidence type="ECO:0000255" key="4"/>
<evidence type="ECO:0000255" key="5">
    <source>
        <dbReference type="PROSITE-ProRule" id="PRU00088"/>
    </source>
</evidence>
<evidence type="ECO:0000255" key="6">
    <source>
        <dbReference type="PROSITE-ProRule" id="PRU00143"/>
    </source>
</evidence>
<evidence type="ECO:0000255" key="7">
    <source>
        <dbReference type="PROSITE-ProRule" id="PRU00716"/>
    </source>
</evidence>
<evidence type="ECO:0000256" key="8">
    <source>
        <dbReference type="SAM" id="MobiDB-lite"/>
    </source>
</evidence>
<evidence type="ECO:0000305" key="9"/>
<sequence>MEEHVFGVQQIQPNVISVRLFKRKVGGLGFLVKERVSKPPVIISDLIRGGAAEQSGLIQAGDIILAVNGRPLVDLSYDSALEVLRGVASETHVVLILRGPEGFTTNLETTFTGDGTPKTIRVTQPLGAPTKAVDLSHQPPSAGKEQPRPVDGAAGPGSWPQPTQGHGQEAGSPSRANGLAPRTSSQDPAKKSGWAGLQGSGDKNELLKEIEPVLTLLAGGSKAVDGGGPAKAETRDTGVQVDRDFDAKSHKPLPLGVENDRVFSDLWGKGSAPVVLNNPYSEKEQPPASGKQSPTKNGSPSKCPRFLKVKNWETDVVLTDTLHLKSTLETGCTEHICMGSIMFPSQHTRRPEDIRTKEQLFPLAKEFIDQYYSSIKRFGSKAHMERLEEVNKEIESTSTYQLKDTELIYGAKHAWRNASRCVGRIQWSKLQVFDARDCTTAHGMFNYICNHIKYATNKGNLRSAITIFPQRTDGKHDFRVWNSQLIRYAGYKQPDGSTLGDPANVQFTEICIQQGWKPPRSRFDVLPLLLQANGNDPELFQIPPELVLEVPIRHPKFEWFKDLGLKWYGLPAVSNMLLEIGGLEFSACPFSGWYMGTEIGVRDYCDNSRYNILEEVAKKMNLDMRKTSSLWKDQALVEINIAVLYSFQSDKVTIVDHHSATESFIKHMENEYRCRGGCPADWVWIVPPMSGSITPVFHQEMLNYRLTPCFEYQPDPWNTHVWKGTNGTPTKRRAIGFKKLAEAVKFSAKLMGQAMAKRVKATILYATETGKSQAYAKTLCEIFKHAFDAKVMSMEEYDIVHLEHETLVLVVTSTFGNGDPPENGEKFRCALMEMRHPNSLQEERKSYKVRFNSVSSYSDSRKSSGDGPDVRDHFESAGPLANVRFSVFGLGSRAYPHFCAFGHAVDTLLEELGGERILKMREGDELCGQEEAFRTWAKKVFKAACDVFCVGDDVNIEKANNSLISNDRSWKRNKFRLTYVAEAPGLTQGLSSVHKKRVSAARLLSRQNLQSPKSSRSTIFVRLHTNGSQELQYQPGDHLGVFPGNHEDLVNALIERLEDAPPANQMVKVELLEERNTALGVISNWKDEPRLPPCTVFQAFKYYLDITTPPTPLQLQQFASLASNEKEKQRLLVLSKGLQEYEEWKWGKNPTIVEVLEEFPSIQMPATLLLTQLSLLQPRYYSISSSPDMYPDEVHLTVAIVSYHTRDGEGPIHHGVCSSWLNRIPADEVVPCFVRGAPSFRLPRNPQVPCILVGPGTAFAPFRSFWQQRQFDIQHKGMSPCPMVLVFGCRQSKIDHIYREEALQAKNKGVFRELYTAYSREPDKPKKYVQDILQEQLAEQVYRALKEQGGHIYVCGDVTMAADVLKAVQRIMAQQGKLSAEDAGVFISRLRDDNRYHEDIFGVTLRTYEVTNRLRSESIAFIEESKKDTDEVFSS</sequence>
<gene>
    <name type="primary">NOS1</name>
</gene>
<name>NOS1_RABIT</name>
<reference key="1">
    <citation type="submission" date="1997-02" db="EMBL/GenBank/DDBJ databases">
        <title>Molecular cloning of a cDNA encoding a constitutive nitric oxide synthase from rabbit brain.</title>
        <authorList>
            <person name="Jeong Y."/>
            <person name="Yim J."/>
        </authorList>
    </citation>
    <scope>NUCLEOTIDE SEQUENCE [MRNA]</scope>
    <source>
        <tissue>Brain</tissue>
    </source>
</reference>
<keyword id="KW-0112">Calmodulin-binding</keyword>
<keyword id="KW-1003">Cell membrane</keyword>
<keyword id="KW-0966">Cell projection</keyword>
<keyword id="KW-0274">FAD</keyword>
<keyword id="KW-0285">Flavoprotein</keyword>
<keyword id="KW-0288">FMN</keyword>
<keyword id="KW-0349">Heme</keyword>
<keyword id="KW-0408">Iron</keyword>
<keyword id="KW-0472">Membrane</keyword>
<keyword id="KW-0479">Metal-binding</keyword>
<keyword id="KW-0521">NADP</keyword>
<keyword id="KW-0560">Oxidoreductase</keyword>
<keyword id="KW-0597">Phosphoprotein</keyword>
<keyword id="KW-1185">Reference proteome</keyword>
<keyword id="KW-0770">Synapse</keyword>
<keyword id="KW-0832">Ubl conjugation</keyword>
<accession>O19132</accession>
<comment type="function">
    <text evidence="2">Produces nitric oxide (NO) which is a messenger molecule with diverse functions throughout the body. In the brain and peripheral nervous system, NO displays many properties of a neurotransmitter. Probably has nitrosylase activity and mediates cysteine S-nitrosylation of cytoplasmic target proteins such SRR (By similarity).</text>
</comment>
<comment type="catalytic activity">
    <reaction evidence="2">
        <text>2 L-arginine + 3 NADPH + 4 O2 + H(+) = 2 L-citrulline + 2 nitric oxide + 3 NADP(+) + 4 H2O</text>
        <dbReference type="Rhea" id="RHEA:19897"/>
        <dbReference type="ChEBI" id="CHEBI:15377"/>
        <dbReference type="ChEBI" id="CHEBI:15378"/>
        <dbReference type="ChEBI" id="CHEBI:15379"/>
        <dbReference type="ChEBI" id="CHEBI:16480"/>
        <dbReference type="ChEBI" id="CHEBI:32682"/>
        <dbReference type="ChEBI" id="CHEBI:57743"/>
        <dbReference type="ChEBI" id="CHEBI:57783"/>
        <dbReference type="ChEBI" id="CHEBI:58349"/>
        <dbReference type="EC" id="1.14.13.39"/>
    </reaction>
    <physiologicalReaction direction="left-to-right" evidence="2">
        <dbReference type="Rhea" id="RHEA:19898"/>
    </physiologicalReaction>
</comment>
<comment type="cofactor">
    <cofactor evidence="1">
        <name>heme b</name>
        <dbReference type="ChEBI" id="CHEBI:60344"/>
    </cofactor>
</comment>
<comment type="cofactor">
    <cofactor evidence="2">
        <name>FAD</name>
        <dbReference type="ChEBI" id="CHEBI:57692"/>
    </cofactor>
    <text evidence="2">Binds 1 FAD.</text>
</comment>
<comment type="cofactor">
    <cofactor evidence="2">
        <name>FMN</name>
        <dbReference type="ChEBI" id="CHEBI:58210"/>
    </cofactor>
    <text evidence="2">Binds 1 FMN.</text>
</comment>
<comment type="cofactor">
    <cofactor evidence="1">
        <name>(6R)-L-erythro-5,6,7,8-tetrahydrobiopterin</name>
        <dbReference type="ChEBI" id="CHEBI:59560"/>
    </cofactor>
    <text evidence="1">Tetrahydrobiopterin (BH4). May stabilize the dimeric form of the enzyme.</text>
</comment>
<comment type="activity regulation">
    <text evidence="2">Stimulated by calcium/calmodulin. Inhibited by DYNLL1 that prevents the dimerization of the protein. Inhibited by NOSIP.</text>
</comment>
<comment type="subunit">
    <text evidence="2 3">Homodimer. Interacts with DLG4; the interaction possibly being prevented by the association between NOS1 and CAPON. Forms a ternary complex with CAPON and RASD1. Forms a ternary complex with CAPON and SYN1. Interacts with ZDHHC23. Interacts with NOSIP; which may impair its synaptic location (By similarity). Interacts with HTR4 (By similarity). Interacts with SLC6A4. Interacts with VAC14 (By similarity). Interacts (via N-terminal domain) with DLG4 (via N-terminal tandem pair of PDZ domains). Interacts with SLC6A4. Forms a complex with ASL, ASS1 and SLC7A1; the complex regulates cell-autonomous L-arginine synthesis and citrulline recycling while channeling extracellular L-arginine to nitric oxide synthesis pathway (By similarity). Interacts with DMD; localizes NOS1 to sarcolemma in muscle cells (By similarity). Interacts with DYNLL1; inhibits the nitric oxide synthase activity (By similarity).</text>
</comment>
<comment type="subcellular location">
    <subcellularLocation>
        <location evidence="3">Cell membrane</location>
        <location evidence="3">Sarcolemma</location>
        <topology evidence="4">Peripheral membrane protein</topology>
    </subcellularLocation>
    <subcellularLocation>
        <location evidence="2">Cell projection</location>
        <location evidence="2">Dendritic spine</location>
    </subcellularLocation>
    <text evidence="2 3">In skeletal muscle, it is localized beneath the sarcolemma of fast-twitch muscle fiber by associating with the dystrophin glycoprotein complex (By similarity). In neurons, enriched in dendritic spines (By similarity).</text>
</comment>
<comment type="domain">
    <text evidence="2">The PDZ domain participates in protein-protein interaction, and is responsible for targeting nNos to synaptic membranes. Mediates interaction with VAC14.</text>
</comment>
<comment type="PTM">
    <text evidence="2">Ubiquitinated; mediated by STUB1/CHIP in the presence of Hsp70 and Hsp40 (in vitro).</text>
</comment>
<comment type="similarity">
    <text evidence="9">Belongs to the NOS family.</text>
</comment>